<keyword id="KW-0119">Carbohydrate metabolism</keyword>
<keyword id="KW-0238">DNA-binding</keyword>
<keyword id="KW-0678">Repressor</keyword>
<keyword id="KW-0804">Transcription</keyword>
<keyword id="KW-0805">Transcription regulation</keyword>
<keyword id="KW-0859">Xylose metabolism</keyword>
<evidence type="ECO:0000250" key="1"/>
<evidence type="ECO:0000305" key="2"/>
<comment type="function">
    <text>Transcriptional repressor of xylose-utilizing enzymes.</text>
</comment>
<comment type="similarity">
    <text evidence="2">Belongs to the ROK (NagC/XylR) family.</text>
</comment>
<protein>
    <recommendedName>
        <fullName>Xylose repressor</fullName>
    </recommendedName>
</protein>
<reference key="1">
    <citation type="journal article" date="1991" name="Mol. Gen. Genet.">
        <title>Organization and characterization of three genes involved in D-xylose catabolism in Lactobacillus pentosus.</title>
        <authorList>
            <person name="Lokman B.C."/>
            <person name="van Santen P."/>
            <person name="Verdoes J.C."/>
            <person name="Kruese J."/>
            <person name="Leer R.J."/>
            <person name="Posno M."/>
            <person name="Pouwels P.H."/>
        </authorList>
    </citation>
    <scope>NUCLEOTIDE SEQUENCE [GENOMIC DNA]</scope>
    <source>
        <strain>MD353</strain>
    </source>
</reference>
<proteinExistence type="inferred from homology"/>
<sequence>MENRSISRTQLRNRNLKLVLQQIINHPATSRIAISHELNLNKSTISSLYNSLSADHFIEELGEGAASNVGGRKPIMARLNKKYGYTITFDLGYRQLHAMANYLDAEIIDYQEIDTKGRPIEAMLDDCRHFVQEMQTQVHAIHGLLGICFSIHGIINDNQIVHSPWIDMHDIDIVKQFKAEFDVPVILENEANLSAIYERDFNAGLDYRNSITLSIHRGIGAGIILDKHLFRGKQGEAGEVGRSLTLLGPNTAGQSVESICSEEAIINRVKRIKQDETTNRQTVVQLYQQHDREVERILSQSCSVIAGLIYNVVTTLNPDAIFINSELLAETPELLGDIQDNYRDIAQDQLPITLTKNTQFATSLGGCSLITHYVLGMVDYELQFKEAD</sequence>
<accession>P21940</accession>
<dbReference type="EMBL" id="M57384">
    <property type="protein sequence ID" value="AAA25257.1"/>
    <property type="molecule type" value="Genomic_DNA"/>
</dbReference>
<dbReference type="PIR" id="S18560">
    <property type="entry name" value="S18560"/>
</dbReference>
<dbReference type="SMR" id="P21940"/>
<dbReference type="STRING" id="1589.GCA_001188985_00557"/>
<dbReference type="GO" id="GO:0003677">
    <property type="term" value="F:DNA binding"/>
    <property type="evidence" value="ECO:0007669"/>
    <property type="project" value="UniProtKB-KW"/>
</dbReference>
<dbReference type="GO" id="GO:0042732">
    <property type="term" value="P:D-xylose metabolic process"/>
    <property type="evidence" value="ECO:0007669"/>
    <property type="project" value="UniProtKB-KW"/>
</dbReference>
<dbReference type="CDD" id="cd24077">
    <property type="entry name" value="ASKHA_ATPase_ROK_SaXylR-like"/>
    <property type="match status" value="1"/>
</dbReference>
<dbReference type="Gene3D" id="3.30.420.40">
    <property type="match status" value="2"/>
</dbReference>
<dbReference type="Gene3D" id="1.10.10.10">
    <property type="entry name" value="Winged helix-like DNA-binding domain superfamily/Winged helix DNA-binding domain"/>
    <property type="match status" value="1"/>
</dbReference>
<dbReference type="InterPro" id="IPR043129">
    <property type="entry name" value="ATPase_NBD"/>
</dbReference>
<dbReference type="InterPro" id="IPR000600">
    <property type="entry name" value="ROK"/>
</dbReference>
<dbReference type="InterPro" id="IPR049874">
    <property type="entry name" value="ROK_cs"/>
</dbReference>
<dbReference type="InterPro" id="IPR036388">
    <property type="entry name" value="WH-like_DNA-bd_sf"/>
</dbReference>
<dbReference type="InterPro" id="IPR036390">
    <property type="entry name" value="WH_DNA-bd_sf"/>
</dbReference>
<dbReference type="PANTHER" id="PTHR18964:SF149">
    <property type="entry name" value="BIFUNCTIONAL UDP-N-ACETYLGLUCOSAMINE 2-EPIMERASE_N-ACETYLMANNOSAMINE KINASE"/>
    <property type="match status" value="1"/>
</dbReference>
<dbReference type="PANTHER" id="PTHR18964">
    <property type="entry name" value="ROK (REPRESSOR, ORF, KINASE) FAMILY"/>
    <property type="match status" value="1"/>
</dbReference>
<dbReference type="Pfam" id="PF00480">
    <property type="entry name" value="ROK"/>
    <property type="match status" value="1"/>
</dbReference>
<dbReference type="SUPFAM" id="SSF53067">
    <property type="entry name" value="Actin-like ATPase domain"/>
    <property type="match status" value="1"/>
</dbReference>
<dbReference type="SUPFAM" id="SSF46785">
    <property type="entry name" value="Winged helix' DNA-binding domain"/>
    <property type="match status" value="1"/>
</dbReference>
<dbReference type="PROSITE" id="PS01125">
    <property type="entry name" value="ROK"/>
    <property type="match status" value="1"/>
</dbReference>
<gene>
    <name type="primary">xylR</name>
</gene>
<name>XYLR_LACPE</name>
<feature type="chain" id="PRO_0000095713" description="Xylose repressor">
    <location>
        <begin position="1"/>
        <end position="388"/>
    </location>
</feature>
<feature type="DNA-binding region" description="H-T-H motif" evidence="1">
    <location>
        <begin position="31"/>
        <end position="50"/>
    </location>
</feature>
<organism>
    <name type="scientific">Lactiplantibacillus pentosus</name>
    <name type="common">Lactobacillus pentosus</name>
    <dbReference type="NCBI Taxonomy" id="1589"/>
    <lineage>
        <taxon>Bacteria</taxon>
        <taxon>Bacillati</taxon>
        <taxon>Bacillota</taxon>
        <taxon>Bacilli</taxon>
        <taxon>Lactobacillales</taxon>
        <taxon>Lactobacillaceae</taxon>
        <taxon>Lactiplantibacillus</taxon>
    </lineage>
</organism>